<organism>
    <name type="scientific">Pectobacterium carotovorum subsp. carotovorum (strain PC1)</name>
    <dbReference type="NCBI Taxonomy" id="561230"/>
    <lineage>
        <taxon>Bacteria</taxon>
        <taxon>Pseudomonadati</taxon>
        <taxon>Pseudomonadota</taxon>
        <taxon>Gammaproteobacteria</taxon>
        <taxon>Enterobacterales</taxon>
        <taxon>Pectobacteriaceae</taxon>
        <taxon>Pectobacterium</taxon>
    </lineage>
</organism>
<proteinExistence type="evidence at protein level"/>
<evidence type="ECO:0000250" key="1"/>
<evidence type="ECO:0000269" key="2">
    <source>
    </source>
</evidence>
<evidence type="ECO:0000305" key="3"/>
<evidence type="ECO:0007829" key="4">
    <source>
        <dbReference type="PDB" id="4E4F"/>
    </source>
</evidence>
<feature type="chain" id="PRO_0000429889" description="D-galactonate dehydratase family member PC1_0802">
    <location>
        <begin position="1"/>
        <end position="404"/>
    </location>
</feature>
<feature type="active site" description="Proton donor/acceptor" evidence="1">
    <location>
        <position position="159"/>
    </location>
</feature>
<feature type="active site" description="Proton donor/acceptor" evidence="1">
    <location>
        <position position="214"/>
    </location>
</feature>
<feature type="binding site" evidence="1">
    <location>
        <position position="37"/>
    </location>
    <ligand>
        <name>substrate</name>
    </ligand>
</feature>
<feature type="binding site" evidence="1">
    <location>
        <position position="122"/>
    </location>
    <ligand>
        <name>substrate</name>
    </ligand>
</feature>
<feature type="binding site" evidence="2">
    <location>
        <position position="212"/>
    </location>
    <ligand>
        <name>Mg(2+)</name>
        <dbReference type="ChEBI" id="CHEBI:18420"/>
    </ligand>
</feature>
<feature type="binding site" evidence="2">
    <location>
        <position position="238"/>
    </location>
    <ligand>
        <name>Mg(2+)</name>
        <dbReference type="ChEBI" id="CHEBI:18420"/>
    </ligand>
</feature>
<feature type="binding site" evidence="2">
    <location>
        <position position="264"/>
    </location>
    <ligand>
        <name>Mg(2+)</name>
        <dbReference type="ChEBI" id="CHEBI:18420"/>
    </ligand>
</feature>
<feature type="binding site" evidence="1">
    <location>
        <position position="264"/>
    </location>
    <ligand>
        <name>substrate</name>
    </ligand>
</feature>
<feature type="binding site" evidence="1">
    <location>
        <position position="285"/>
    </location>
    <ligand>
        <name>substrate</name>
    </ligand>
</feature>
<feature type="binding site" evidence="1">
    <location>
        <position position="314"/>
    </location>
    <ligand>
        <name>substrate</name>
    </ligand>
</feature>
<feature type="binding site" evidence="1">
    <location>
        <position position="318"/>
    </location>
    <ligand>
        <name>substrate</name>
    </ligand>
</feature>
<feature type="binding site" evidence="1">
    <location>
        <position position="341"/>
    </location>
    <ligand>
        <name>substrate</name>
    </ligand>
</feature>
<feature type="site" description="Important for activity and substrate specificity; Pro is observed in family members with low D-mannonate dehydratase activity" evidence="1">
    <location>
        <position position="316"/>
    </location>
</feature>
<feature type="strand" evidence="4">
    <location>
        <begin position="2"/>
        <end position="11"/>
    </location>
</feature>
<feature type="strand" evidence="4">
    <location>
        <begin position="13"/>
        <end position="15"/>
    </location>
</feature>
<feature type="strand" evidence="4">
    <location>
        <begin position="17"/>
        <end position="24"/>
    </location>
</feature>
<feature type="strand" evidence="4">
    <location>
        <begin position="29"/>
        <end position="33"/>
    </location>
</feature>
<feature type="helix" evidence="4">
    <location>
        <begin position="40"/>
        <end position="49"/>
    </location>
</feature>
<feature type="helix" evidence="4">
    <location>
        <begin position="51"/>
        <end position="55"/>
    </location>
</feature>
<feature type="helix" evidence="4">
    <location>
        <begin position="63"/>
        <end position="73"/>
    </location>
</feature>
<feature type="helix" evidence="4">
    <location>
        <begin position="80"/>
        <end position="101"/>
    </location>
</feature>
<feature type="helix" evidence="4">
    <location>
        <begin position="105"/>
        <end position="109"/>
    </location>
</feature>
<feature type="strand" evidence="4">
    <location>
        <begin position="113"/>
        <end position="123"/>
    </location>
</feature>
<feature type="helix" evidence="4">
    <location>
        <begin position="128"/>
        <end position="140"/>
    </location>
</feature>
<feature type="strand" evidence="4">
    <location>
        <begin position="144"/>
        <end position="148"/>
    </location>
</feature>
<feature type="strand" evidence="4">
    <location>
        <begin position="172"/>
        <end position="177"/>
    </location>
</feature>
<feature type="strand" evidence="4">
    <location>
        <begin position="180"/>
        <end position="183"/>
    </location>
</feature>
<feature type="helix" evidence="4">
    <location>
        <begin position="185"/>
        <end position="203"/>
    </location>
</feature>
<feature type="strand" evidence="4">
    <location>
        <begin position="206"/>
        <end position="212"/>
    </location>
</feature>
<feature type="helix" evidence="4">
    <location>
        <begin position="219"/>
        <end position="228"/>
    </location>
</feature>
<feature type="helix" evidence="4">
    <location>
        <begin position="229"/>
        <end position="232"/>
    </location>
</feature>
<feature type="strand" evidence="4">
    <location>
        <begin position="235"/>
        <end position="238"/>
    </location>
</feature>
<feature type="helix" evidence="4">
    <location>
        <begin position="246"/>
        <end position="249"/>
    </location>
</feature>
<feature type="helix" evidence="4">
    <location>
        <begin position="250"/>
        <end position="253"/>
    </location>
</feature>
<feature type="strand" evidence="4">
    <location>
        <begin position="260"/>
        <end position="262"/>
    </location>
</feature>
<feature type="helix" evidence="4">
    <location>
        <begin position="269"/>
        <end position="271"/>
    </location>
</feature>
<feature type="helix" evidence="4">
    <location>
        <begin position="273"/>
        <end position="277"/>
    </location>
</feature>
<feature type="strand" evidence="4">
    <location>
        <begin position="282"/>
        <end position="284"/>
    </location>
</feature>
<feature type="turn" evidence="4">
    <location>
        <begin position="288"/>
        <end position="292"/>
    </location>
</feature>
<feature type="helix" evidence="4">
    <location>
        <begin position="293"/>
        <end position="305"/>
    </location>
</feature>
<feature type="turn" evidence="4">
    <location>
        <begin position="306"/>
        <end position="308"/>
    </location>
</feature>
<feature type="strand" evidence="4">
    <location>
        <begin position="310"/>
        <end position="313"/>
    </location>
</feature>
<feature type="helix" evidence="4">
    <location>
        <begin position="321"/>
        <end position="333"/>
    </location>
</feature>
<feature type="strand" evidence="4">
    <location>
        <begin position="337"/>
        <end position="341"/>
    </location>
</feature>
<feature type="helix" evidence="4">
    <location>
        <begin position="347"/>
        <end position="352"/>
    </location>
</feature>
<feature type="strand" evidence="4">
    <location>
        <begin position="358"/>
        <end position="360"/>
    </location>
</feature>
<feature type="strand" evidence="4">
    <location>
        <begin position="363"/>
        <end position="365"/>
    </location>
</feature>
<feature type="strand" evidence="4">
    <location>
        <begin position="368"/>
        <end position="371"/>
    </location>
</feature>
<feature type="helix" evidence="4">
    <location>
        <begin position="378"/>
        <end position="381"/>
    </location>
</feature>
<feature type="strand" evidence="4">
    <location>
        <begin position="393"/>
        <end position="396"/>
    </location>
</feature>
<comment type="function">
    <text evidence="2">Has low D-mannonate dehydratase activity (in vitro), suggesting that this is not a physiological substrate and that it has no significant role in D-mannonate degradation in vivo. Has no detectable activity with a panel of 70 other acid sugars (in vitro).</text>
</comment>
<comment type="catalytic activity">
    <reaction evidence="2">
        <text>D-mannonate = 2-dehydro-3-deoxy-D-gluconate + H2O</text>
        <dbReference type="Rhea" id="RHEA:20097"/>
        <dbReference type="ChEBI" id="CHEBI:15377"/>
        <dbReference type="ChEBI" id="CHEBI:17767"/>
        <dbReference type="ChEBI" id="CHEBI:57990"/>
        <dbReference type="EC" id="4.2.1.8"/>
    </reaction>
</comment>
<comment type="cofactor">
    <cofactor evidence="2">
        <name>Mg(2+)</name>
        <dbReference type="ChEBI" id="CHEBI:18420"/>
    </cofactor>
    <text evidence="2">Binds 1 Mg(2+) ion per subunit.</text>
</comment>
<comment type="biophysicochemical properties">
    <kinetics>
        <text evidence="2">kcat is 0.01 sec(-1) with D-mannonate.</text>
    </kinetics>
</comment>
<comment type="similarity">
    <text evidence="3">Belongs to the mandelate racemase/muconate lactonizing enzyme family. GalD subfamily.</text>
</comment>
<protein>
    <recommendedName>
        <fullName>D-galactonate dehydratase family member PC1_0802</fullName>
        <ecNumber>4.2.1.-</ecNumber>
    </recommendedName>
    <alternativeName>
        <fullName>D-mannonate dehydratase</fullName>
        <ecNumber>4.2.1.8</ecNumber>
    </alternativeName>
</protein>
<dbReference type="EC" id="4.2.1.-"/>
<dbReference type="EC" id="4.2.1.8"/>
<dbReference type="EMBL" id="CP001657">
    <property type="protein sequence ID" value="ACT11856.1"/>
    <property type="molecule type" value="Genomic_DNA"/>
</dbReference>
<dbReference type="PDB" id="4E4F">
    <property type="method" value="X-ray"/>
    <property type="resolution" value="2.00 A"/>
    <property type="chains" value="A/B/C/D=1-404"/>
</dbReference>
<dbReference type="PDBsum" id="4E4F"/>
<dbReference type="SMR" id="C6D9S0"/>
<dbReference type="STRING" id="561230.PC1_0802"/>
<dbReference type="KEGG" id="pct:PC1_0802"/>
<dbReference type="eggNOG" id="COG4948">
    <property type="taxonomic scope" value="Bacteria"/>
</dbReference>
<dbReference type="HOGENOM" id="CLU_030273_6_1_6"/>
<dbReference type="OrthoDB" id="103536at2"/>
<dbReference type="EvolutionaryTrace" id="C6D9S0"/>
<dbReference type="Proteomes" id="UP000002736">
    <property type="component" value="Chromosome"/>
</dbReference>
<dbReference type="GO" id="GO:0000287">
    <property type="term" value="F:magnesium ion binding"/>
    <property type="evidence" value="ECO:0000314"/>
    <property type="project" value="UniProtKB"/>
</dbReference>
<dbReference type="GO" id="GO:0008927">
    <property type="term" value="F:mannonate dehydratase activity"/>
    <property type="evidence" value="ECO:0000314"/>
    <property type="project" value="UniProtKB"/>
</dbReference>
<dbReference type="GO" id="GO:0009063">
    <property type="term" value="P:amino acid catabolic process"/>
    <property type="evidence" value="ECO:0007669"/>
    <property type="project" value="InterPro"/>
</dbReference>
<dbReference type="GO" id="GO:0016052">
    <property type="term" value="P:carbohydrate catabolic process"/>
    <property type="evidence" value="ECO:0000314"/>
    <property type="project" value="UniProtKB"/>
</dbReference>
<dbReference type="CDD" id="cd03322">
    <property type="entry name" value="RspA"/>
    <property type="match status" value="1"/>
</dbReference>
<dbReference type="FunFam" id="3.20.20.120:FF:000004">
    <property type="entry name" value="D-galactonate dehydratase family protein"/>
    <property type="match status" value="1"/>
</dbReference>
<dbReference type="FunFam" id="3.30.390.10:FF:000002">
    <property type="entry name" value="D-galactonate dehydratase family protein"/>
    <property type="match status" value="1"/>
</dbReference>
<dbReference type="Gene3D" id="3.20.20.120">
    <property type="entry name" value="Enolase-like C-terminal domain"/>
    <property type="match status" value="1"/>
</dbReference>
<dbReference type="Gene3D" id="3.30.390.10">
    <property type="entry name" value="Enolase-like, N-terminal domain"/>
    <property type="match status" value="1"/>
</dbReference>
<dbReference type="InterPro" id="IPR034589">
    <property type="entry name" value="D-mannonate_dehydratase-like"/>
</dbReference>
<dbReference type="InterPro" id="IPR053379">
    <property type="entry name" value="D-mannonate_dehydratase_GalD"/>
</dbReference>
<dbReference type="InterPro" id="IPR034593">
    <property type="entry name" value="DgoD-like"/>
</dbReference>
<dbReference type="InterPro" id="IPR036849">
    <property type="entry name" value="Enolase-like_C_sf"/>
</dbReference>
<dbReference type="InterPro" id="IPR029017">
    <property type="entry name" value="Enolase-like_N"/>
</dbReference>
<dbReference type="InterPro" id="IPR029065">
    <property type="entry name" value="Enolase_C-like"/>
</dbReference>
<dbReference type="InterPro" id="IPR018110">
    <property type="entry name" value="Mandel_Rmase/mucon_lact_enz_CS"/>
</dbReference>
<dbReference type="InterPro" id="IPR013342">
    <property type="entry name" value="Mandelate_racemase_C"/>
</dbReference>
<dbReference type="InterPro" id="IPR013341">
    <property type="entry name" value="Mandelate_racemase_N_dom"/>
</dbReference>
<dbReference type="NCBIfam" id="NF043051">
    <property type="entry name" value="ManoateDhtManD"/>
    <property type="match status" value="1"/>
</dbReference>
<dbReference type="NCBIfam" id="NF011654">
    <property type="entry name" value="PRK15072.1"/>
    <property type="match status" value="1"/>
</dbReference>
<dbReference type="PANTHER" id="PTHR48080">
    <property type="entry name" value="D-GALACTONATE DEHYDRATASE-RELATED"/>
    <property type="match status" value="1"/>
</dbReference>
<dbReference type="PANTHER" id="PTHR48080:SF6">
    <property type="entry name" value="STARVATION-SENSING PROTEIN RSPA"/>
    <property type="match status" value="1"/>
</dbReference>
<dbReference type="Pfam" id="PF13378">
    <property type="entry name" value="MR_MLE_C"/>
    <property type="match status" value="1"/>
</dbReference>
<dbReference type="Pfam" id="PF02746">
    <property type="entry name" value="MR_MLE_N"/>
    <property type="match status" value="1"/>
</dbReference>
<dbReference type="SFLD" id="SFLDS00001">
    <property type="entry name" value="Enolase"/>
    <property type="match status" value="1"/>
</dbReference>
<dbReference type="SFLD" id="SFLDG00033">
    <property type="entry name" value="mannonate_dehydratase"/>
    <property type="match status" value="1"/>
</dbReference>
<dbReference type="SMART" id="SM00922">
    <property type="entry name" value="MR_MLE"/>
    <property type="match status" value="1"/>
</dbReference>
<dbReference type="SUPFAM" id="SSF51604">
    <property type="entry name" value="Enolase C-terminal domain-like"/>
    <property type="match status" value="1"/>
</dbReference>
<dbReference type="SUPFAM" id="SSF54826">
    <property type="entry name" value="Enolase N-terminal domain-like"/>
    <property type="match status" value="1"/>
</dbReference>
<dbReference type="PROSITE" id="PS00908">
    <property type="entry name" value="MR_MLE_1"/>
    <property type="match status" value="1"/>
</dbReference>
<dbReference type="PROSITE" id="PS00909">
    <property type="entry name" value="MR_MLE_2"/>
    <property type="match status" value="1"/>
</dbReference>
<name>MAND_PECCP</name>
<gene>
    <name type="ordered locus">PC1_0802</name>
</gene>
<accession>C6D9S0</accession>
<keyword id="KW-0002">3D-structure</keyword>
<keyword id="KW-0456">Lyase</keyword>
<keyword id="KW-0460">Magnesium</keyword>
<keyword id="KW-0479">Metal-binding</keyword>
<sequence>MKIVSAEVFVTCPGRNFVTLKITTDSGLTGLGDATLNGRELPVASYLNDHVCPQLIGRDAHQIEDIWQYFYKGAYWRRGPVTMSAISAVDMALWDIKAKAANMPLYQLLGGASRTGVMVYCHTTGHSIDEVLDDYAKHRDQGFKAIRVQCGVPGMETTYGMAKGKGLAYEPATKGSLPEEQLWSTEKYLDFTPKLFEAVRDKFGFNEHLLHDMHHRLTPIEAARFGKSVEDYRLFWMEDPTPAENQACFRLIRQHTVTPIAVGEVFNSIWDCKQLIEEQLIDYIRTTITHAGGITGMRRIADFASLYQVRTGSHGPSDLSPICMAAALHFDLWVPNFGVQEYMGYSEQMLEVFPHSWTFDNGYMHPGEKPGLGIEFDEKLAAKYPYDPAYLPVARLEDGTLWNW</sequence>
<reference key="1">
    <citation type="submission" date="2009-07" db="EMBL/GenBank/DDBJ databases">
        <title>Complete sequence of Pectobacterium carotovorum subsp. carotovorum PC1.</title>
        <authorList>
            <consortium name="US DOE Joint Genome Institute"/>
            <person name="Lucas S."/>
            <person name="Copeland A."/>
            <person name="Lapidus A."/>
            <person name="Glavina del Rio T."/>
            <person name="Tice H."/>
            <person name="Bruce D."/>
            <person name="Goodwin L."/>
            <person name="Pitluck S."/>
            <person name="Munk A.C."/>
            <person name="Brettin T."/>
            <person name="Detter J.C."/>
            <person name="Han C."/>
            <person name="Tapia R."/>
            <person name="Larimer F."/>
            <person name="Land M."/>
            <person name="Hauser L."/>
            <person name="Kyrpides N."/>
            <person name="Mikhailova N."/>
            <person name="Balakrishnan V."/>
            <person name="Glasner J."/>
            <person name="Perna N.T."/>
        </authorList>
    </citation>
    <scope>NUCLEOTIDE SEQUENCE [LARGE SCALE GENOMIC DNA]</scope>
    <source>
        <strain>PC1</strain>
    </source>
</reference>
<reference key="2">
    <citation type="journal article" date="2014" name="Biochemistry">
        <title>Discovery of function in the enolase superfamily: D-mannonate and D-gluconate dehydratases in the D-mannonate dehydratase subgroup.</title>
        <authorList>
            <person name="Wichelecki D.J."/>
            <person name="Balthazor B.M."/>
            <person name="Chau A.C."/>
            <person name="Vetting M.W."/>
            <person name="Fedorov A.A."/>
            <person name="Fedorov E.V."/>
            <person name="Lukk T."/>
            <person name="Patskovsky Y.V."/>
            <person name="Stead M.B."/>
            <person name="Hillerich B.S."/>
            <person name="Seidel R.D."/>
            <person name="Almo S.C."/>
            <person name="Gerlt J.A."/>
        </authorList>
    </citation>
    <scope>X-RAY CRYSTALLOGRAPHY (2.00 ANGSTROMS) IN COMPLEX WITH MAGNESIUM</scope>
    <scope>FUNCTION</scope>
    <scope>CATALYTIC ACTIVITY</scope>
    <scope>COFACTOR</scope>
    <scope>BIOPHYSICOCHEMICAL PROPERTIES</scope>
    <source>
        <strain>PC1</strain>
    </source>
</reference>